<organism>
    <name type="scientific">Schistosoma mansoni</name>
    <name type="common">Blood fluke</name>
    <dbReference type="NCBI Taxonomy" id="6183"/>
    <lineage>
        <taxon>Eukaryota</taxon>
        <taxon>Metazoa</taxon>
        <taxon>Spiralia</taxon>
        <taxon>Lophotrochozoa</taxon>
        <taxon>Platyhelminthes</taxon>
        <taxon>Trematoda</taxon>
        <taxon>Digenea</taxon>
        <taxon>Strigeidida</taxon>
        <taxon>Schistosomatoidea</taxon>
        <taxon>Schistosomatidae</taxon>
        <taxon>Schistosoma</taxon>
    </lineage>
</organism>
<proteinExistence type="evidence at protein level"/>
<name>SINA_SCHMA</name>
<feature type="chain" id="PRO_0000056179" description="E3 ubiquitin-protein ligase sina">
    <location>
        <begin position="1"/>
        <end position="371"/>
    </location>
</feature>
<feature type="zinc finger region" description="RING-type" evidence="2">
    <location>
        <begin position="126"/>
        <end position="161"/>
    </location>
</feature>
<feature type="zinc finger region" description="SIAH-type" evidence="3">
    <location>
        <begin position="178"/>
        <end position="238"/>
    </location>
</feature>
<feature type="region of interest" description="SBD">
    <location>
        <begin position="175"/>
        <end position="366"/>
    </location>
</feature>
<feature type="binding site" evidence="1">
    <location>
        <position position="183"/>
    </location>
    <ligand>
        <name>Zn(2+)</name>
        <dbReference type="ChEBI" id="CHEBI:29105"/>
        <label>1</label>
    </ligand>
</feature>
<feature type="binding site" evidence="1">
    <location>
        <position position="190"/>
    </location>
    <ligand>
        <name>Zn(2+)</name>
        <dbReference type="ChEBI" id="CHEBI:29105"/>
        <label>1</label>
    </ligand>
</feature>
<feature type="binding site" evidence="1">
    <location>
        <position position="202"/>
    </location>
    <ligand>
        <name>Zn(2+)</name>
        <dbReference type="ChEBI" id="CHEBI:29105"/>
        <label>1</label>
    </ligand>
</feature>
<feature type="binding site" evidence="1">
    <location>
        <position position="206"/>
    </location>
    <ligand>
        <name>Zn(2+)</name>
        <dbReference type="ChEBI" id="CHEBI:29105"/>
        <label>1</label>
    </ligand>
</feature>
<feature type="binding site" evidence="1">
    <location>
        <position position="213"/>
    </location>
    <ligand>
        <name>Zn(2+)</name>
        <dbReference type="ChEBI" id="CHEBI:29105"/>
        <label>2</label>
    </ligand>
</feature>
<feature type="binding site" evidence="1">
    <location>
        <position position="220"/>
    </location>
    <ligand>
        <name>Zn(2+)</name>
        <dbReference type="ChEBI" id="CHEBI:29105"/>
        <label>2</label>
    </ligand>
</feature>
<feature type="binding site" evidence="1">
    <location>
        <position position="232"/>
    </location>
    <ligand>
        <name>Zn(2+)</name>
        <dbReference type="ChEBI" id="CHEBI:29105"/>
        <label>2</label>
    </ligand>
</feature>
<feature type="binding site" evidence="1">
    <location>
        <position position="237"/>
    </location>
    <ligand>
        <name>Zn(2+)</name>
        <dbReference type="ChEBI" id="CHEBI:29105"/>
        <label>2</label>
    </ligand>
</feature>
<dbReference type="EC" id="2.3.2.27"/>
<dbReference type="EMBL" id="AY227022">
    <property type="protein sequence ID" value="AAO67521.1"/>
    <property type="molecule type" value="mRNA"/>
</dbReference>
<dbReference type="RefSeq" id="XP_018646300.1">
    <property type="nucleotide sequence ID" value="XM_018790387.1"/>
</dbReference>
<dbReference type="SMR" id="Q86MW9"/>
<dbReference type="FunCoup" id="Q86MW9">
    <property type="interactions" value="1273"/>
</dbReference>
<dbReference type="STRING" id="6183.Q86MW9"/>
<dbReference type="KEGG" id="smm:Smp_000650"/>
<dbReference type="WBParaSite" id="Smp_000650.1">
    <property type="protein sequence ID" value="Smp_000650.1"/>
    <property type="gene ID" value="Smp_000650"/>
</dbReference>
<dbReference type="CTD" id="8343550"/>
<dbReference type="eggNOG" id="KOG3002">
    <property type="taxonomic scope" value="Eukaryota"/>
</dbReference>
<dbReference type="HOGENOM" id="CLU_028215_0_0_1"/>
<dbReference type="InParanoid" id="Q86MW9"/>
<dbReference type="OMA" id="TSIAQFC"/>
<dbReference type="OrthoDB" id="941555at2759"/>
<dbReference type="PhylomeDB" id="Q86MW9"/>
<dbReference type="UniPathway" id="UPA00143"/>
<dbReference type="Proteomes" id="UP000008854">
    <property type="component" value="Unassembled WGS sequence"/>
</dbReference>
<dbReference type="GO" id="GO:0005737">
    <property type="term" value="C:cytoplasm"/>
    <property type="evidence" value="ECO:0007669"/>
    <property type="project" value="InterPro"/>
</dbReference>
<dbReference type="GO" id="GO:0031624">
    <property type="term" value="F:ubiquitin conjugating enzyme binding"/>
    <property type="evidence" value="ECO:0007669"/>
    <property type="project" value="TreeGrafter"/>
</dbReference>
<dbReference type="GO" id="GO:0061630">
    <property type="term" value="F:ubiquitin protein ligase activity"/>
    <property type="evidence" value="ECO:0007669"/>
    <property type="project" value="TreeGrafter"/>
</dbReference>
<dbReference type="GO" id="GO:0008270">
    <property type="term" value="F:zinc ion binding"/>
    <property type="evidence" value="ECO:0007669"/>
    <property type="project" value="UniProtKB-KW"/>
</dbReference>
<dbReference type="GO" id="GO:0043161">
    <property type="term" value="P:proteasome-mediated ubiquitin-dependent protein catabolic process"/>
    <property type="evidence" value="ECO:0007669"/>
    <property type="project" value="TreeGrafter"/>
</dbReference>
<dbReference type="GO" id="GO:0016567">
    <property type="term" value="P:protein ubiquitination"/>
    <property type="evidence" value="ECO:0007669"/>
    <property type="project" value="UniProtKB-UniPathway"/>
</dbReference>
<dbReference type="CDD" id="cd03829">
    <property type="entry name" value="Sina"/>
    <property type="match status" value="1"/>
</dbReference>
<dbReference type="FunFam" id="2.60.210.10:FF:000002">
    <property type="entry name" value="E3 ubiquitin-protein ligase"/>
    <property type="match status" value="1"/>
</dbReference>
<dbReference type="FunFam" id="3.30.40.10:FF:000041">
    <property type="entry name" value="E3 ubiquitin-protein ligase SINAT3"/>
    <property type="match status" value="1"/>
</dbReference>
<dbReference type="Gene3D" id="2.60.210.10">
    <property type="entry name" value="Apoptosis, Tumor Necrosis Factor Receptor Associated Protein 2, Chain A"/>
    <property type="match status" value="1"/>
</dbReference>
<dbReference type="Gene3D" id="3.30.40.10">
    <property type="entry name" value="Zinc/RING finger domain, C3HC4 (zinc finger)"/>
    <property type="match status" value="2"/>
</dbReference>
<dbReference type="InterPro" id="IPR018121">
    <property type="entry name" value="7-in-absentia-prot_TRAF-dom"/>
</dbReference>
<dbReference type="InterPro" id="IPR004162">
    <property type="entry name" value="SINA-like_animal"/>
</dbReference>
<dbReference type="InterPro" id="IPR049548">
    <property type="entry name" value="Sina-like_RING"/>
</dbReference>
<dbReference type="InterPro" id="IPR008974">
    <property type="entry name" value="TRAF-like"/>
</dbReference>
<dbReference type="InterPro" id="IPR001841">
    <property type="entry name" value="Znf_RING"/>
</dbReference>
<dbReference type="InterPro" id="IPR013083">
    <property type="entry name" value="Znf_RING/FYVE/PHD"/>
</dbReference>
<dbReference type="InterPro" id="IPR013010">
    <property type="entry name" value="Znf_SIAH"/>
</dbReference>
<dbReference type="PANTHER" id="PTHR45877">
    <property type="entry name" value="E3 UBIQUITIN-PROTEIN LIGASE SIAH2"/>
    <property type="match status" value="1"/>
</dbReference>
<dbReference type="PANTHER" id="PTHR45877:SF2">
    <property type="entry name" value="E3 UBIQUITIN-PROTEIN LIGASE SINA-RELATED"/>
    <property type="match status" value="1"/>
</dbReference>
<dbReference type="Pfam" id="PF21362">
    <property type="entry name" value="Sina_RING"/>
    <property type="match status" value="1"/>
</dbReference>
<dbReference type="Pfam" id="PF03145">
    <property type="entry name" value="Sina_TRAF"/>
    <property type="match status" value="1"/>
</dbReference>
<dbReference type="Pfam" id="PF21361">
    <property type="entry name" value="Sina_ZnF"/>
    <property type="match status" value="1"/>
</dbReference>
<dbReference type="SUPFAM" id="SSF57850">
    <property type="entry name" value="RING/U-box"/>
    <property type="match status" value="1"/>
</dbReference>
<dbReference type="SUPFAM" id="SSF49599">
    <property type="entry name" value="TRAF domain-like"/>
    <property type="match status" value="1"/>
</dbReference>
<dbReference type="PROSITE" id="PS50089">
    <property type="entry name" value="ZF_RING_2"/>
    <property type="match status" value="1"/>
</dbReference>
<dbReference type="PROSITE" id="PS51081">
    <property type="entry name" value="ZF_SIAH"/>
    <property type="match status" value="1"/>
</dbReference>
<comment type="function">
    <text evidence="4">E3 ubiquitin-protein ligase that mediates ubiquitination and subsequent proteasomal degradation of target proteins. E3 ubiquitin ligases accept ubiquitin from an E2 ubiquitin-conjugating enzyme in the form of a thioester and then directly transfers the ubiquitin to targeted substrates. Mediates the ubiquitin-mediated degradation of nuclear receptors for retinoids SmRXR1 and SmRXR2.</text>
</comment>
<comment type="catalytic activity">
    <reaction>
        <text>S-ubiquitinyl-[E2 ubiquitin-conjugating enzyme]-L-cysteine + [acceptor protein]-L-lysine = [E2 ubiquitin-conjugating enzyme]-L-cysteine + N(6)-ubiquitinyl-[acceptor protein]-L-lysine.</text>
        <dbReference type="EC" id="2.3.2.27"/>
    </reaction>
</comment>
<comment type="pathway">
    <text>Protein modification; protein ubiquitination.</text>
</comment>
<comment type="subunit">
    <text evidence="1">Homodimer.</text>
</comment>
<comment type="tissue specificity">
    <text evidence="4">Widely expressed. Colocalizes with SmRXR1 and SmRXR2 in vitelline cells.</text>
</comment>
<comment type="domain">
    <text evidence="1">The RING-type zinc finger domain is essential for ubiquitin ligase activity.</text>
</comment>
<comment type="domain">
    <text evidence="1">The SBD domain (substrate-binding domain) mediates the homodimerization and the interaction with substrate proteins. It is related to the TRAF family.</text>
</comment>
<comment type="similarity">
    <text evidence="5">Belongs to the SINA (Seven in absentia) family.</text>
</comment>
<reference key="1">
    <citation type="journal article" date="2003" name="Mol. Biochem. Parasitol.">
        <title>Cloning of Schistosoma mansoni Seven in absentia (SmSINA)(+) homologue cDNA, a gene involved in ubiquitination of SmRXR1 and SmRXR2.</title>
        <authorList>
            <person name="Fantappie M.R."/>
            <person name="Osman A."/>
            <person name="Ericsson C."/>
            <person name="Niles E.G."/>
            <person name="LoVerde P.T."/>
        </authorList>
    </citation>
    <scope>NUCLEOTIDE SEQUENCE [MRNA]</scope>
    <scope>FUNCTION IN DEGRADATION OF SMRXR1 AND SMRXR2</scope>
    <scope>TISSUE SPECIFICITY</scope>
</reference>
<keyword id="KW-0479">Metal-binding</keyword>
<keyword id="KW-1185">Reference proteome</keyword>
<keyword id="KW-0808">Transferase</keyword>
<keyword id="KW-0833">Ubl conjugation pathway</keyword>
<keyword id="KW-0862">Zinc</keyword>
<keyword id="KW-0863">Zinc-finger</keyword>
<protein>
    <recommendedName>
        <fullName>E3 ubiquitin-protein ligase sina</fullName>
        <ecNumber>2.3.2.27</ecNumber>
    </recommendedName>
    <alternativeName>
        <fullName evidence="5">RING-type E3 ubiquitin transferase sina</fullName>
    </alternativeName>
    <alternativeName>
        <fullName>Seven in absentia homolog</fullName>
    </alternativeName>
    <alternativeName>
        <fullName>SmSINA</fullName>
    </alternativeName>
</protein>
<accession>Q86MW9</accession>
<evidence type="ECO:0000250" key="1"/>
<evidence type="ECO:0000255" key="2">
    <source>
        <dbReference type="PROSITE-ProRule" id="PRU00175"/>
    </source>
</evidence>
<evidence type="ECO:0000255" key="3">
    <source>
        <dbReference type="PROSITE-ProRule" id="PRU00455"/>
    </source>
</evidence>
<evidence type="ECO:0000269" key="4">
    <source>
    </source>
</evidence>
<evidence type="ECO:0000305" key="5"/>
<sequence length="371" mass="40584">MNNSITEVNMSVPSRATNSNNTILSEERTCHRSQMASSDAVGRTMALLPINHNHALHHGIKLMPHINMPHREVGATTPLVTNSGTASTCSMSLPGSMSSASDTVCNILPHNTSDSSSIDLASLFECPVCMDYALPPIMQCQSGHIVCASCRSKLSSCPTCRGNLDNIRNLAMEKLASSVLFPCKYSTSGCPETFHYTSKSEHEAACEYRPYDCPCPGASCKWLGELEQVMPHLVHHHKSITTLQGEDIVFLATDISLPGAVDWVMMQSCFGHSFMLVLEKQERVPDQIFFALVQLIGTRKQADQFVYRLELNGHRRRLTWEACPRSIHDGVQSAIAVSDCLVFDSNTAHSFAENGNLGINVTISQVSPSIS</sequence>
<gene>
    <name type="primary">SINA</name>
</gene>